<evidence type="ECO:0000250" key="1">
    <source>
        <dbReference type="UniProtKB" id="P0DSV7"/>
    </source>
</evidence>
<evidence type="ECO:0000250" key="2">
    <source>
        <dbReference type="UniProtKB" id="Q76ZJ3"/>
    </source>
</evidence>
<evidence type="ECO:0000255" key="3"/>
<evidence type="ECO:0000255" key="4">
    <source>
        <dbReference type="PROSITE-ProRule" id="PRU00206"/>
    </source>
</evidence>
<evidence type="ECO:0000305" key="5"/>
<protein>
    <recommendedName>
        <fullName>Soluble TNF receptor II</fullName>
    </recommendedName>
    <alternativeName>
        <fullName>Cytokine response-modifying protein B</fullName>
    </alternativeName>
</protein>
<gene>
    <name type="primary">OPG002</name>
    <name type="synonym">CRMB1</name>
    <name type="ordered locus">CMLV002</name>
</gene>
<gene>
    <name type="primary">CRMB2</name>
    <name type="ordered locus">CMLV210</name>
</gene>
<dbReference type="EMBL" id="AF438165">
    <property type="protein sequence ID" value="AAL73917.1"/>
    <property type="molecule type" value="Genomic_DNA"/>
</dbReference>
<dbReference type="EMBL" id="AF438165">
    <property type="protein sequence ID" value="AAL73920.1"/>
    <property type="molecule type" value="Genomic_DNA"/>
</dbReference>
<dbReference type="RefSeq" id="NP_570392.1">
    <property type="nucleotide sequence ID" value="NC_003391.1"/>
</dbReference>
<dbReference type="RefSeq" id="NP_570600.1">
    <property type="nucleotide sequence ID" value="NC_003391.1"/>
</dbReference>
<dbReference type="SMR" id="P68636"/>
<dbReference type="GlyCosmos" id="P68636">
    <property type="glycosylation" value="3 sites, No reported glycans"/>
</dbReference>
<dbReference type="KEGG" id="vg:932503"/>
<dbReference type="KEGG" id="vg:932635"/>
<dbReference type="Proteomes" id="UP000152221">
    <property type="component" value="Genome"/>
</dbReference>
<dbReference type="GO" id="GO:0043120">
    <property type="term" value="F:tumor necrosis factor binding"/>
    <property type="evidence" value="ECO:0007669"/>
    <property type="project" value="TreeGrafter"/>
</dbReference>
<dbReference type="GO" id="GO:0005031">
    <property type="term" value="F:tumor necrosis factor receptor activity"/>
    <property type="evidence" value="ECO:0007669"/>
    <property type="project" value="InterPro"/>
</dbReference>
<dbReference type="GO" id="GO:0051044">
    <property type="term" value="P:positive regulation of membrane protein ectodomain proteolysis"/>
    <property type="evidence" value="ECO:0007669"/>
    <property type="project" value="TreeGrafter"/>
</dbReference>
<dbReference type="GO" id="GO:0042129">
    <property type="term" value="P:regulation of T cell proliferation"/>
    <property type="evidence" value="ECO:0007669"/>
    <property type="project" value="TreeGrafter"/>
</dbReference>
<dbReference type="GO" id="GO:0052031">
    <property type="term" value="P:symbiont-mediated perturbation of host defense response"/>
    <property type="evidence" value="ECO:0007669"/>
    <property type="project" value="InterPro"/>
</dbReference>
<dbReference type="CDD" id="cd15839">
    <property type="entry name" value="TNFRSF_viral"/>
    <property type="match status" value="1"/>
</dbReference>
<dbReference type="Gene3D" id="2.60.240.20">
    <property type="match status" value="1"/>
</dbReference>
<dbReference type="Gene3D" id="2.10.50.10">
    <property type="entry name" value="Tumor Necrosis Factor Receptor, subunit A, domain 2"/>
    <property type="match status" value="2"/>
</dbReference>
<dbReference type="InterPro" id="IPR010806">
    <property type="entry name" value="Poxvirus_TNF-rcpt-II_C"/>
</dbReference>
<dbReference type="InterPro" id="IPR011172">
    <property type="entry name" value="Poxvirus_TNF_rcpt-II"/>
</dbReference>
<dbReference type="InterPro" id="IPR051670">
    <property type="entry name" value="TNF_chemokine_rcpt-like"/>
</dbReference>
<dbReference type="InterPro" id="IPR001368">
    <property type="entry name" value="TNFR/NGFR_Cys_rich_reg"/>
</dbReference>
<dbReference type="InterPro" id="IPR034059">
    <property type="entry name" value="TNFRSF_N_viral"/>
</dbReference>
<dbReference type="PANTHER" id="PTHR47386">
    <property type="entry name" value="TUMOR NECROSIS FACTOR RECEPTOR SUPERFAMILY MEMBER 1B"/>
    <property type="match status" value="1"/>
</dbReference>
<dbReference type="PANTHER" id="PTHR47386:SF1">
    <property type="entry name" value="TUMOR NECROSIS FACTOR RECEPTOR SUPERFAMILY MEMBER 1B"/>
    <property type="match status" value="1"/>
</dbReference>
<dbReference type="Pfam" id="PF07190">
    <property type="entry name" value="CrmD_SECRET"/>
    <property type="match status" value="1"/>
</dbReference>
<dbReference type="Pfam" id="PF00020">
    <property type="entry name" value="TNFR_c6"/>
    <property type="match status" value="1"/>
</dbReference>
<dbReference type="PIRSF" id="PIRSF001790">
    <property type="entry name" value="TNF_C22L"/>
    <property type="match status" value="1"/>
</dbReference>
<dbReference type="SMART" id="SM00208">
    <property type="entry name" value="TNFR"/>
    <property type="match status" value="3"/>
</dbReference>
<dbReference type="SUPFAM" id="SSF57586">
    <property type="entry name" value="TNF receptor-like"/>
    <property type="match status" value="2"/>
</dbReference>
<dbReference type="PROSITE" id="PS00652">
    <property type="entry name" value="TNFR_NGFR_1"/>
    <property type="match status" value="2"/>
</dbReference>
<dbReference type="PROSITE" id="PS50050">
    <property type="entry name" value="TNFR_NGFR_2"/>
    <property type="match status" value="2"/>
</dbReference>
<organismHost>
    <name type="scientific">Camelus</name>
    <dbReference type="NCBI Taxonomy" id="9836"/>
</organismHost>
<comment type="function">
    <text evidence="1">Inhibits host immune defense by binding to host TNF and various chemokines in the extracellular space. Binds host CC chemokines (beta chemokines) and CXC chemokines (alpha chemokines).</text>
</comment>
<comment type="induction">
    <text evidence="2">Expressed in the early phase of the viral replicative cycle.</text>
</comment>
<comment type="similarity">
    <text evidence="5">Belongs to the orthopoxvirus OPG002 family.</text>
</comment>
<keyword id="KW-1015">Disulfide bond</keyword>
<keyword id="KW-0325">Glycoprotein</keyword>
<keyword id="KW-0675">Receptor</keyword>
<keyword id="KW-0677">Repeat</keyword>
<keyword id="KW-0732">Signal</keyword>
<reference key="1">
    <citation type="journal article" date="2002" name="Virology">
        <title>The genome of camelpox virus.</title>
        <authorList>
            <person name="Afonso C.L."/>
            <person name="Tulman E.R."/>
            <person name="Lu Z."/>
            <person name="Zsak L."/>
            <person name="Sandybaev N.T."/>
            <person name="Kerembekova U.Z."/>
            <person name="Zaitsev V.L."/>
            <person name="Kutish G.F."/>
            <person name="Rock D.L."/>
        </authorList>
    </citation>
    <scope>NUCLEOTIDE SEQUENCE [LARGE SCALE GENOMIC DNA]</scope>
</reference>
<feature type="signal peptide" evidence="3">
    <location>
        <begin position="1"/>
        <end position="19"/>
    </location>
</feature>
<feature type="chain" id="PRO_0000034616" description="Soluble TNF receptor II">
    <location>
        <begin position="20"/>
        <end position="349"/>
    </location>
</feature>
<feature type="repeat" description="TNFR-Cys 1">
    <location>
        <begin position="31"/>
        <end position="65"/>
    </location>
</feature>
<feature type="repeat" description="TNFR-Cys 2">
    <location>
        <begin position="67"/>
        <end position="108"/>
    </location>
</feature>
<feature type="glycosylation site" description="N-linked (GlcNAc...) asparagine; by host" evidence="3">
    <location>
        <position position="101"/>
    </location>
</feature>
<feature type="glycosylation site" description="N-linked (GlcNAc...) asparagine; by host" evidence="3">
    <location>
        <position position="189"/>
    </location>
</feature>
<feature type="glycosylation site" description="N-linked (GlcNAc...) asparagine; by host" evidence="3">
    <location>
        <position position="248"/>
    </location>
</feature>
<feature type="disulfide bond" evidence="4">
    <location>
        <begin position="32"/>
        <end position="43"/>
    </location>
</feature>
<feature type="disulfide bond" evidence="4">
    <location>
        <begin position="44"/>
        <end position="57"/>
    </location>
</feature>
<feature type="disulfide bond" evidence="4">
    <location>
        <begin position="47"/>
        <end position="65"/>
    </location>
</feature>
<feature type="disulfide bond" evidence="4">
    <location>
        <begin position="68"/>
        <end position="83"/>
    </location>
</feature>
<feature type="disulfide bond" evidence="4">
    <location>
        <begin position="86"/>
        <end position="100"/>
    </location>
</feature>
<feature type="disulfide bond" evidence="4">
    <location>
        <begin position="90"/>
        <end position="108"/>
    </location>
</feature>
<organism>
    <name type="scientific">Camelpox virus (strain M-96)</name>
    <dbReference type="NCBI Taxonomy" id="203173"/>
    <lineage>
        <taxon>Viruses</taxon>
        <taxon>Varidnaviria</taxon>
        <taxon>Bamfordvirae</taxon>
        <taxon>Nucleocytoviricota</taxon>
        <taxon>Pokkesviricetes</taxon>
        <taxon>Chitovirales</taxon>
        <taxon>Poxviridae</taxon>
        <taxon>Chordopoxvirinae</taxon>
        <taxon>Orthopoxvirus</taxon>
        <taxon>Camelpox virus</taxon>
    </lineage>
</organism>
<name>CRMB_CAMPM</name>
<accession>P68636</accession>
<accession>Q8UYA7</accession>
<sequence length="349" mass="38065">MKSVLYSYILFLSCIIINGRDVTPYAPSNGKCKDNEYKRHNLCCLSCPPGTYASRLCDSKTNTQCTPCGSGTFTSRNNHLPACLSCNGRCDSNQVETRSCNTTHNRICECSPGYYCILKGSSGCKACVSQTKCGIGYGVSGHTSAGDVICSPCGLGTYSRTVSSADKCEPVPSNTFNYIDVEINLYPVNDTSCTRTTTTGISESISTSELTITMNHKDCDPVFREEYFSVLNKVATSGFFTGENRYQNISKVCTLNFEIKCNNKGSSSKQLTKAKNDDGIMPHSETVTLVGDCLSSVDIYILYSNTNTQDYETDTISYHAGNVLDVDSHMPGSCDIHKLITNSKPTHFL</sequence>
<proteinExistence type="inferred from homology"/>